<accession>Q06051</accession>
<dbReference type="EMBL" id="U19729">
    <property type="protein sequence ID" value="AAB82345.1"/>
    <property type="molecule type" value="Genomic_DNA"/>
</dbReference>
<dbReference type="EMBL" id="AY558536">
    <property type="protein sequence ID" value="AAS56862.1"/>
    <property type="molecule type" value="Genomic_DNA"/>
</dbReference>
<dbReference type="PIR" id="S55956">
    <property type="entry name" value="S55956"/>
</dbReference>
<dbReference type="STRING" id="4932.YLR400W"/>
<dbReference type="PaxDb" id="4932-YLR400W"/>
<dbReference type="EnsemblFungi" id="YLR400W_mRNA">
    <property type="protein sequence ID" value="YLR400W"/>
    <property type="gene ID" value="YLR400W"/>
</dbReference>
<dbReference type="AGR" id="SGD:S000004392"/>
<dbReference type="SGD" id="S000004392">
    <property type="gene designation" value="YLR400W"/>
</dbReference>
<dbReference type="HOGENOM" id="CLU_1679328_0_0_1"/>
<dbReference type="GO" id="GO:0016020">
    <property type="term" value="C:membrane"/>
    <property type="evidence" value="ECO:0007669"/>
    <property type="project" value="UniProtKB-SubCell"/>
</dbReference>
<comment type="subcellular location">
    <subcellularLocation>
        <location evidence="2">Membrane</location>
        <topology evidence="2">Single-pass membrane protein</topology>
    </subcellularLocation>
</comment>
<comment type="miscellaneous">
    <text evidence="2">Partially overlaps DUS3.</text>
</comment>
<comment type="caution">
    <text evidence="3">Product of a dubious gene prediction unlikely to encode a functional protein. Because of that it is not part of the S.cerevisiae S288c complete/reference proteome set.</text>
</comment>
<reference key="1">
    <citation type="journal article" date="1997" name="Nature">
        <title>The nucleotide sequence of Saccharomyces cerevisiae chromosome XII.</title>
        <authorList>
            <person name="Johnston M."/>
            <person name="Hillier L.W."/>
            <person name="Riles L."/>
            <person name="Albermann K."/>
            <person name="Andre B."/>
            <person name="Ansorge W."/>
            <person name="Benes V."/>
            <person name="Brueckner M."/>
            <person name="Delius H."/>
            <person name="Dubois E."/>
            <person name="Duesterhoeft A."/>
            <person name="Entian K.-D."/>
            <person name="Floeth M."/>
            <person name="Goffeau A."/>
            <person name="Hebling U."/>
            <person name="Heumann K."/>
            <person name="Heuss-Neitzel D."/>
            <person name="Hilbert H."/>
            <person name="Hilger F."/>
            <person name="Kleine K."/>
            <person name="Koetter P."/>
            <person name="Louis E.J."/>
            <person name="Messenguy F."/>
            <person name="Mewes H.-W."/>
            <person name="Miosga T."/>
            <person name="Moestl D."/>
            <person name="Mueller-Auer S."/>
            <person name="Nentwich U."/>
            <person name="Obermaier B."/>
            <person name="Piravandi E."/>
            <person name="Pohl T.M."/>
            <person name="Portetelle D."/>
            <person name="Purnelle B."/>
            <person name="Rechmann S."/>
            <person name="Rieger M."/>
            <person name="Rinke M."/>
            <person name="Rose M."/>
            <person name="Scharfe M."/>
            <person name="Scherens B."/>
            <person name="Scholler P."/>
            <person name="Schwager C."/>
            <person name="Schwarz S."/>
            <person name="Underwood A.P."/>
            <person name="Urrestarazu L.A."/>
            <person name="Vandenbol M."/>
            <person name="Verhasselt P."/>
            <person name="Vierendeels F."/>
            <person name="Voet M."/>
            <person name="Volckaert G."/>
            <person name="Voss H."/>
            <person name="Wambutt R."/>
            <person name="Wedler E."/>
            <person name="Wedler H."/>
            <person name="Zimmermann F.K."/>
            <person name="Zollner A."/>
            <person name="Hani J."/>
            <person name="Hoheisel J.D."/>
        </authorList>
    </citation>
    <scope>NUCLEOTIDE SEQUENCE [LARGE SCALE GENOMIC DNA]</scope>
    <source>
        <strain>ATCC 204508 / S288c</strain>
    </source>
</reference>
<reference key="2">
    <citation type="journal article" date="2014" name="G3 (Bethesda)">
        <title>The reference genome sequence of Saccharomyces cerevisiae: Then and now.</title>
        <authorList>
            <person name="Engel S.R."/>
            <person name="Dietrich F.S."/>
            <person name="Fisk D.G."/>
            <person name="Binkley G."/>
            <person name="Balakrishnan R."/>
            <person name="Costanzo M.C."/>
            <person name="Dwight S.S."/>
            <person name="Hitz B.C."/>
            <person name="Karra K."/>
            <person name="Nash R.S."/>
            <person name="Weng S."/>
            <person name="Wong E.D."/>
            <person name="Lloyd P."/>
            <person name="Skrzypek M.S."/>
            <person name="Miyasato S.R."/>
            <person name="Simison M."/>
            <person name="Cherry J.M."/>
        </authorList>
    </citation>
    <scope>GENOME REANNOTATION</scope>
    <source>
        <strain>ATCC 204508 / S288c</strain>
    </source>
</reference>
<reference key="3">
    <citation type="journal article" date="2007" name="Genome Res.">
        <title>Approaching a complete repository of sequence-verified protein-encoding clones for Saccharomyces cerevisiae.</title>
        <authorList>
            <person name="Hu Y."/>
            <person name="Rolfs A."/>
            <person name="Bhullar B."/>
            <person name="Murthy T.V.S."/>
            <person name="Zhu C."/>
            <person name="Berger M.F."/>
            <person name="Camargo A.A."/>
            <person name="Kelley F."/>
            <person name="McCarron S."/>
            <person name="Jepson D."/>
            <person name="Richardson A."/>
            <person name="Raphael J."/>
            <person name="Moreira D."/>
            <person name="Taycher E."/>
            <person name="Zuo D."/>
            <person name="Mohr S."/>
            <person name="Kane M.F."/>
            <person name="Williamson J."/>
            <person name="Simpson A.J.G."/>
            <person name="Bulyk M.L."/>
            <person name="Harlow E."/>
            <person name="Marsischky G."/>
            <person name="Kolodner R.D."/>
            <person name="LaBaer J."/>
        </authorList>
    </citation>
    <scope>NUCLEOTIDE SEQUENCE [GENOMIC DNA]</scope>
    <source>
        <strain>ATCC 204508 / S288c</strain>
    </source>
</reference>
<name>YL400_YEAST</name>
<protein>
    <recommendedName>
        <fullName>Putative uncharacterized protein YLR400W</fullName>
    </recommendedName>
</protein>
<gene>
    <name type="ordered locus">YLR400W</name>
    <name type="ORF">L8084.6</name>
</gene>
<feature type="chain" id="PRO_0000299646" description="Putative uncharacterized protein YLR400W">
    <location>
        <begin position="1"/>
        <end position="157"/>
    </location>
</feature>
<feature type="transmembrane region" description="Helical" evidence="1">
    <location>
        <begin position="42"/>
        <end position="64"/>
    </location>
</feature>
<keyword id="KW-0472">Membrane</keyword>
<keyword id="KW-0812">Transmembrane</keyword>
<keyword id="KW-1133">Transmembrane helix</keyword>
<evidence type="ECO:0000255" key="1"/>
<evidence type="ECO:0000305" key="2"/>
<evidence type="ECO:0000305" key="3">
    <source>
    </source>
</evidence>
<proteinExistence type="uncertain"/>
<organism>
    <name type="scientific">Saccharomyces cerevisiae (strain ATCC 204508 / S288c)</name>
    <name type="common">Baker's yeast</name>
    <dbReference type="NCBI Taxonomy" id="559292"/>
    <lineage>
        <taxon>Eukaryota</taxon>
        <taxon>Fungi</taxon>
        <taxon>Dikarya</taxon>
        <taxon>Ascomycota</taxon>
        <taxon>Saccharomycotina</taxon>
        <taxon>Saccharomycetes</taxon>
        <taxon>Saccharomycetales</taxon>
        <taxon>Saccharomycetaceae</taxon>
        <taxon>Saccharomyces</taxon>
    </lineage>
</organism>
<sequence>MNFPDTPVCEMPFFRGDLRDSNHCAFSKSTCIYLLFEPLRYSCIRLIVMFICVAMITCPNSLRFSQYTFLRSYLTLPSCAYFDFLGTHTSRLKLTPVHIPILVLQRKNNRAYPSDMIYDTCTLDFLFRNLCLHKSCSYVWGQIQSSRRFYRKIDHLA</sequence>